<feature type="chain" id="PRO_1000125668" description="Porphobilinogen deaminase">
    <location>
        <begin position="1"/>
        <end position="308"/>
    </location>
</feature>
<feature type="modified residue" description="S-(dipyrrolylmethanemethyl)cysteine" evidence="1">
    <location>
        <position position="240"/>
    </location>
</feature>
<sequence length="308" mass="33989">MGSVKIGTRDSQLALWQAEWVKRKLEEYYPEREFVLVPMKTKGDKILDVPLAKIGDKGLFTKELEVGLLNGEIDCAVHSLKDLPTVLPPGLEIAAFCEREEPRDVFLSKDGTPLGSLPAGSIIGTSSLRRKAQLQNYRSDLSFADLRGNLQTRWRKLQESDMAGIVLAAAGVKRLGWEDRITEYISEEIMLSAVGQGAIAVEIAAQRADVREMLDLLNHGDTERAVKAERALLYRLEGGCQIPIGAWAVTEQQQIVLKGMVASLDGQRILKVTLSGEHPEELGRQAADLLIAQGALEILQEIRTPLEK</sequence>
<accession>B8G2M2</accession>
<evidence type="ECO:0000255" key="1">
    <source>
        <dbReference type="HAMAP-Rule" id="MF_00260"/>
    </source>
</evidence>
<keyword id="KW-0627">Porphyrin biosynthesis</keyword>
<keyword id="KW-0808">Transferase</keyword>
<protein>
    <recommendedName>
        <fullName evidence="1">Porphobilinogen deaminase</fullName>
        <shortName evidence="1">PBG</shortName>
        <ecNumber evidence="1">2.5.1.61</ecNumber>
    </recommendedName>
    <alternativeName>
        <fullName evidence="1">Hydroxymethylbilane synthase</fullName>
        <shortName evidence="1">HMBS</shortName>
    </alternativeName>
    <alternativeName>
        <fullName evidence="1">Pre-uroporphyrinogen synthase</fullName>
    </alternativeName>
</protein>
<name>HEM3_DESHD</name>
<reference key="1">
    <citation type="journal article" date="2012" name="BMC Microbiol.">
        <title>Genome sequence of Desulfitobacterium hafniense DCB-2, a Gram-positive anaerobe capable of dehalogenation and metal reduction.</title>
        <authorList>
            <person name="Kim S.H."/>
            <person name="Harzman C."/>
            <person name="Davis J.K."/>
            <person name="Hutcheson R."/>
            <person name="Broderick J.B."/>
            <person name="Marsh T.L."/>
            <person name="Tiedje J.M."/>
        </authorList>
    </citation>
    <scope>NUCLEOTIDE SEQUENCE [LARGE SCALE GENOMIC DNA]</scope>
    <source>
        <strain>DSM 10664 / DCB-2</strain>
    </source>
</reference>
<organism>
    <name type="scientific">Desulfitobacterium hafniense (strain DSM 10664 / DCB-2)</name>
    <dbReference type="NCBI Taxonomy" id="272564"/>
    <lineage>
        <taxon>Bacteria</taxon>
        <taxon>Bacillati</taxon>
        <taxon>Bacillota</taxon>
        <taxon>Clostridia</taxon>
        <taxon>Eubacteriales</taxon>
        <taxon>Desulfitobacteriaceae</taxon>
        <taxon>Desulfitobacterium</taxon>
    </lineage>
</organism>
<proteinExistence type="inferred from homology"/>
<comment type="function">
    <text evidence="1">Tetrapolymerization of the monopyrrole PBG into the hydroxymethylbilane pre-uroporphyrinogen in several discrete steps.</text>
</comment>
<comment type="catalytic activity">
    <reaction evidence="1">
        <text>4 porphobilinogen + H2O = hydroxymethylbilane + 4 NH4(+)</text>
        <dbReference type="Rhea" id="RHEA:13185"/>
        <dbReference type="ChEBI" id="CHEBI:15377"/>
        <dbReference type="ChEBI" id="CHEBI:28938"/>
        <dbReference type="ChEBI" id="CHEBI:57845"/>
        <dbReference type="ChEBI" id="CHEBI:58126"/>
        <dbReference type="EC" id="2.5.1.61"/>
    </reaction>
</comment>
<comment type="cofactor">
    <cofactor evidence="1">
        <name>dipyrromethane</name>
        <dbReference type="ChEBI" id="CHEBI:60342"/>
    </cofactor>
    <text evidence="1">Binds 1 dipyrromethane group covalently.</text>
</comment>
<comment type="pathway">
    <text evidence="1">Porphyrin-containing compound metabolism; protoporphyrin-IX biosynthesis; coproporphyrinogen-III from 5-aminolevulinate: step 2/4.</text>
</comment>
<comment type="subunit">
    <text evidence="1">Monomer.</text>
</comment>
<comment type="miscellaneous">
    <text evidence="1">The porphobilinogen subunits are added to the dipyrromethane group.</text>
</comment>
<comment type="similarity">
    <text evidence="1">Belongs to the HMBS family.</text>
</comment>
<gene>
    <name evidence="1" type="primary">hemC</name>
    <name type="ordered locus">Dhaf_3354</name>
</gene>
<dbReference type="EC" id="2.5.1.61" evidence="1"/>
<dbReference type="EMBL" id="CP001336">
    <property type="protein sequence ID" value="ACL21372.1"/>
    <property type="molecule type" value="Genomic_DNA"/>
</dbReference>
<dbReference type="RefSeq" id="WP_011460181.1">
    <property type="nucleotide sequence ID" value="NC_011830.1"/>
</dbReference>
<dbReference type="SMR" id="B8G2M2"/>
<dbReference type="KEGG" id="dhd:Dhaf_3354"/>
<dbReference type="HOGENOM" id="CLU_019704_0_2_9"/>
<dbReference type="UniPathway" id="UPA00251">
    <property type="reaction ID" value="UER00319"/>
</dbReference>
<dbReference type="Proteomes" id="UP000007726">
    <property type="component" value="Chromosome"/>
</dbReference>
<dbReference type="GO" id="GO:0005737">
    <property type="term" value="C:cytoplasm"/>
    <property type="evidence" value="ECO:0007669"/>
    <property type="project" value="TreeGrafter"/>
</dbReference>
<dbReference type="GO" id="GO:0004418">
    <property type="term" value="F:hydroxymethylbilane synthase activity"/>
    <property type="evidence" value="ECO:0007669"/>
    <property type="project" value="UniProtKB-UniRule"/>
</dbReference>
<dbReference type="GO" id="GO:0006782">
    <property type="term" value="P:protoporphyrinogen IX biosynthetic process"/>
    <property type="evidence" value="ECO:0007669"/>
    <property type="project" value="UniProtKB-UniRule"/>
</dbReference>
<dbReference type="CDD" id="cd13646">
    <property type="entry name" value="PBP2_EcHMBS_like"/>
    <property type="match status" value="1"/>
</dbReference>
<dbReference type="FunFam" id="3.40.190.10:FF:000004">
    <property type="entry name" value="Porphobilinogen deaminase"/>
    <property type="match status" value="1"/>
</dbReference>
<dbReference type="FunFam" id="3.40.190.10:FF:000005">
    <property type="entry name" value="Porphobilinogen deaminase"/>
    <property type="match status" value="1"/>
</dbReference>
<dbReference type="Gene3D" id="3.40.190.10">
    <property type="entry name" value="Periplasmic binding protein-like II"/>
    <property type="match status" value="2"/>
</dbReference>
<dbReference type="Gene3D" id="3.30.160.40">
    <property type="entry name" value="Porphobilinogen deaminase, C-terminal domain"/>
    <property type="match status" value="1"/>
</dbReference>
<dbReference type="HAMAP" id="MF_00260">
    <property type="entry name" value="Porphobil_deam"/>
    <property type="match status" value="1"/>
</dbReference>
<dbReference type="InterPro" id="IPR000860">
    <property type="entry name" value="HemC"/>
</dbReference>
<dbReference type="InterPro" id="IPR022419">
    <property type="entry name" value="Porphobilin_deaminase_cofac_BS"/>
</dbReference>
<dbReference type="InterPro" id="IPR022417">
    <property type="entry name" value="Porphobilin_deaminase_N"/>
</dbReference>
<dbReference type="InterPro" id="IPR022418">
    <property type="entry name" value="Porphobilinogen_deaminase_C"/>
</dbReference>
<dbReference type="InterPro" id="IPR036803">
    <property type="entry name" value="Porphobilinogen_deaminase_C_sf"/>
</dbReference>
<dbReference type="NCBIfam" id="TIGR00212">
    <property type="entry name" value="hemC"/>
    <property type="match status" value="1"/>
</dbReference>
<dbReference type="PANTHER" id="PTHR11557">
    <property type="entry name" value="PORPHOBILINOGEN DEAMINASE"/>
    <property type="match status" value="1"/>
</dbReference>
<dbReference type="PANTHER" id="PTHR11557:SF0">
    <property type="entry name" value="PORPHOBILINOGEN DEAMINASE"/>
    <property type="match status" value="1"/>
</dbReference>
<dbReference type="Pfam" id="PF01379">
    <property type="entry name" value="Porphobil_deam"/>
    <property type="match status" value="1"/>
</dbReference>
<dbReference type="Pfam" id="PF03900">
    <property type="entry name" value="Porphobil_deamC"/>
    <property type="match status" value="1"/>
</dbReference>
<dbReference type="PIRSF" id="PIRSF001438">
    <property type="entry name" value="4pyrrol_synth_OHMeBilane_synth"/>
    <property type="match status" value="1"/>
</dbReference>
<dbReference type="PRINTS" id="PR00151">
    <property type="entry name" value="PORPHBDMNASE"/>
</dbReference>
<dbReference type="SUPFAM" id="SSF53850">
    <property type="entry name" value="Periplasmic binding protein-like II"/>
    <property type="match status" value="1"/>
</dbReference>
<dbReference type="SUPFAM" id="SSF54782">
    <property type="entry name" value="Porphobilinogen deaminase (hydroxymethylbilane synthase), C-terminal domain"/>
    <property type="match status" value="1"/>
</dbReference>
<dbReference type="PROSITE" id="PS00533">
    <property type="entry name" value="PORPHOBILINOGEN_DEAM"/>
    <property type="match status" value="1"/>
</dbReference>